<comment type="function">
    <text evidence="2">Subunit of the oligosaccharyl transferase (OST) complex that catalyzes the initial transfer of a defined glycan (Glc(3)Man(9)GlcNAc(2) in eukaryotes) from the lipid carrier dolichol-pyrophosphate to an asparagine residue within an Asn-X-Ser/Thr consensus motif in nascent polypeptide chains, the first step in protein N-glycosylation. N-glycosylation occurs cotranslationally and the complex associates with the Sec61 complex at the channel-forming translocon complex that mediates protein translocation across the endoplasmic reticulum (ER). All subunits are required for a maximal enzyme activity.</text>
</comment>
<comment type="pathway">
    <text evidence="3">Protein modification; protein glycosylation.</text>
</comment>
<comment type="subunit">
    <text evidence="2">Component of the oligosaccharyltransferase (OST) complex.</text>
</comment>
<comment type="subcellular location">
    <subcellularLocation>
        <location evidence="1">Endoplasmic reticulum membrane</location>
        <topology evidence="1">Multi-pass membrane protein</topology>
    </subcellularLocation>
</comment>
<comment type="disruption phenotype">
    <text evidence="5 6">RNAi-mediated knock-down is mostly embryonic lethal (PubMed:23691084, PubMed:24130834). Embryogenesis proceeds more slowly and embryos are osmo-sensitive (PubMed:23691084). Twenty-five percent of embryos exhibit cytokinesis defects (PubMed:24130834). Sixty-five percent of embryos have incorrectly positioned cleavage furrows (PubMed:24130834). Other phenotypes include delayed chromosome alignment at metaphase and disrupted endoplasmic reticulum morphology (PubMed:24130834).</text>
</comment>
<comment type="similarity">
    <text evidence="7">Belongs to the SWP1 family.</text>
</comment>
<protein>
    <recommendedName>
        <fullName evidence="3">Dolichyl-diphosphooligosaccharide--protein glycosyltransferase subunit 2</fullName>
    </recommendedName>
    <alternativeName>
        <fullName evidence="9">Oligosaccharyl transferase delta subunit</fullName>
    </alternativeName>
    <alternativeName>
        <fullName evidence="3">Ribophorin II</fullName>
        <shortName evidence="3">RPN-II</shortName>
    </alternativeName>
    <alternativeName>
        <fullName evidence="3">Ribophorin-2</fullName>
    </alternativeName>
</protein>
<reference evidence="8" key="1">
    <citation type="journal article" date="1998" name="Science">
        <title>Genome sequence of the nematode C. elegans: a platform for investigating biology.</title>
        <authorList>
            <consortium name="The C. elegans sequencing consortium"/>
        </authorList>
    </citation>
    <scope>NUCLEOTIDE SEQUENCE [LARGE SCALE GENOMIC DNA]</scope>
    <source>
        <strain evidence="8">Bristol N2</strain>
    </source>
</reference>
<reference evidence="7" key="2">
    <citation type="journal article" date="2013" name="PLoS ONE">
        <title>N-glycosylation is required for secretion and mitosis in C. elegans.</title>
        <authorList>
            <person name="Stevens J."/>
            <person name="Spang A."/>
        </authorList>
    </citation>
    <scope>DISRUPTION PHENOTYPE</scope>
</reference>
<reference evidence="7" key="3">
    <citation type="journal article" date="2013" name="PLoS ONE">
        <title>Profiling of the mammalian mitotic spindle proteome reveals an ER protein, OSTD-1, as being necessary for cell division and ER morphology.</title>
        <authorList>
            <person name="Bonner M.K."/>
            <person name="Han B.H."/>
            <person name="Skop A."/>
        </authorList>
    </citation>
    <scope>DISRUPTION PHENOTYPE</scope>
</reference>
<accession>P91390</accession>
<name>RPN2_CAEEL</name>
<evidence type="ECO:0000250" key="1"/>
<evidence type="ECO:0000250" key="2">
    <source>
        <dbReference type="UniProtKB" id="F1PCT7"/>
    </source>
</evidence>
<evidence type="ECO:0000250" key="3">
    <source>
        <dbReference type="UniProtKB" id="P04844"/>
    </source>
</evidence>
<evidence type="ECO:0000255" key="4"/>
<evidence type="ECO:0000269" key="5">
    <source>
    </source>
</evidence>
<evidence type="ECO:0000269" key="6">
    <source>
    </source>
</evidence>
<evidence type="ECO:0000305" key="7"/>
<evidence type="ECO:0000312" key="8">
    <source>
        <dbReference type="Proteomes" id="UP000001940"/>
    </source>
</evidence>
<evidence type="ECO:0000312" key="9">
    <source>
        <dbReference type="WormBase" id="M01A10.3"/>
    </source>
</evidence>
<organism evidence="8">
    <name type="scientific">Caenorhabditis elegans</name>
    <dbReference type="NCBI Taxonomy" id="6239"/>
    <lineage>
        <taxon>Eukaryota</taxon>
        <taxon>Metazoa</taxon>
        <taxon>Ecdysozoa</taxon>
        <taxon>Nematoda</taxon>
        <taxon>Chromadorea</taxon>
        <taxon>Rhabditida</taxon>
        <taxon>Rhabditina</taxon>
        <taxon>Rhabditomorpha</taxon>
        <taxon>Rhabditoidea</taxon>
        <taxon>Rhabditidae</taxon>
        <taxon>Peloderinae</taxon>
        <taxon>Caenorhabditis</taxon>
    </lineage>
</organism>
<sequence>MKLLLVLLTIASVALAAVDDVAVNNFKVGILAKDQQPSDENLKTVALFSKLPNELKADASQRLYVSFTVAKKSDNAKVKPHQVFLRFVAQNGEDVVVVVNPDANGNYVYDNVLRTAAKSFRNLSGQFKISLLVGDVTIKNPINWQFANIDAALPVAYEPTPKSQQVHFEPLNEISHIFRQPEKRPSALISDLFTIICLSPLLILVVLWSQVGINFQNAPASPWVPIFHVGLIGIFGIYFMFWVQFDMFVTLKYLAVLGFLTFVAGNRVLRAISESKQKSE</sequence>
<proteinExistence type="inferred from homology"/>
<dbReference type="EMBL" id="FO081508">
    <property type="protein sequence ID" value="CCD72083.1"/>
    <property type="molecule type" value="Genomic_DNA"/>
</dbReference>
<dbReference type="PIR" id="T25829">
    <property type="entry name" value="T25829"/>
</dbReference>
<dbReference type="RefSeq" id="NP_491624.1">
    <property type="nucleotide sequence ID" value="NM_059223.9"/>
</dbReference>
<dbReference type="SMR" id="P91390"/>
<dbReference type="ComplexPortal" id="CPX-968">
    <property type="entry name" value="Oligosaccharyltransferase complex"/>
</dbReference>
<dbReference type="FunCoup" id="P91390">
    <property type="interactions" value="223"/>
</dbReference>
<dbReference type="STRING" id="6239.M01A10.3.2"/>
<dbReference type="PaxDb" id="6239-M01A10.3.1"/>
<dbReference type="PeptideAtlas" id="P91390"/>
<dbReference type="EnsemblMetazoa" id="M01A10.3.1">
    <property type="protein sequence ID" value="M01A10.3.1"/>
    <property type="gene ID" value="WBGene00019693"/>
</dbReference>
<dbReference type="GeneID" id="172208"/>
<dbReference type="KEGG" id="cel:CELE_M01A10.3"/>
<dbReference type="UCSC" id="M01A10.3.1">
    <property type="organism name" value="c. elegans"/>
</dbReference>
<dbReference type="AGR" id="WB:WBGene00019693"/>
<dbReference type="CTD" id="172208"/>
<dbReference type="WormBase" id="M01A10.3">
    <property type="protein sequence ID" value="CE12232"/>
    <property type="gene ID" value="WBGene00019693"/>
    <property type="gene designation" value="ostd-1"/>
</dbReference>
<dbReference type="eggNOG" id="KOG2447">
    <property type="taxonomic scope" value="Eukaryota"/>
</dbReference>
<dbReference type="GeneTree" id="ENSGT00390000002635"/>
<dbReference type="HOGENOM" id="CLU_086778_0_0_1"/>
<dbReference type="InParanoid" id="P91390"/>
<dbReference type="OMA" id="VFFMYYT"/>
<dbReference type="OrthoDB" id="432292at2759"/>
<dbReference type="PhylomeDB" id="P91390"/>
<dbReference type="UniPathway" id="UPA00378"/>
<dbReference type="PRO" id="PR:P91390"/>
<dbReference type="Proteomes" id="UP000001940">
    <property type="component" value="Chromosome I"/>
</dbReference>
<dbReference type="Bgee" id="WBGene00019693">
    <property type="expression patterns" value="Expressed in embryo and 4 other cell types or tissues"/>
</dbReference>
<dbReference type="GO" id="GO:0008250">
    <property type="term" value="C:oligosaccharyltransferase complex"/>
    <property type="evidence" value="ECO:0000303"/>
    <property type="project" value="ComplexPortal"/>
</dbReference>
<dbReference type="GO" id="GO:0007029">
    <property type="term" value="P:endoplasmic reticulum organization"/>
    <property type="evidence" value="ECO:0000315"/>
    <property type="project" value="WormBase"/>
</dbReference>
<dbReference type="GO" id="GO:0006487">
    <property type="term" value="P:protein N-linked glycosylation"/>
    <property type="evidence" value="ECO:0000303"/>
    <property type="project" value="ComplexPortal"/>
</dbReference>
<dbReference type="GO" id="GO:0051302">
    <property type="term" value="P:regulation of cell division"/>
    <property type="evidence" value="ECO:0000315"/>
    <property type="project" value="WormBase"/>
</dbReference>
<dbReference type="InterPro" id="IPR055374">
    <property type="entry name" value="Ribophorin_II_3rd"/>
</dbReference>
<dbReference type="InterPro" id="IPR056790">
    <property type="entry name" value="Ribophorin_II_C"/>
</dbReference>
<dbReference type="InterPro" id="IPR008814">
    <property type="entry name" value="Swp1"/>
</dbReference>
<dbReference type="PANTHER" id="PTHR12640:SF0">
    <property type="entry name" value="DOLICHYL-DIPHOSPHOOLIGOSACCHARIDE--PROTEIN GLYCOSYLTRANSFERASE SUBUNIT 2"/>
    <property type="match status" value="1"/>
</dbReference>
<dbReference type="PANTHER" id="PTHR12640">
    <property type="entry name" value="RIBOPHORIN II"/>
    <property type="match status" value="1"/>
</dbReference>
<dbReference type="Pfam" id="PF23860">
    <property type="entry name" value="Ribophorin_II_3rd"/>
    <property type="match status" value="1"/>
</dbReference>
<dbReference type="Pfam" id="PF25147">
    <property type="entry name" value="Ribophorin_II_C"/>
    <property type="match status" value="1"/>
</dbReference>
<gene>
    <name evidence="9" type="primary">ostd-1</name>
    <name evidence="9" type="ORF">M01A10.3</name>
</gene>
<feature type="signal peptide" evidence="4">
    <location>
        <begin position="1"/>
        <end position="16"/>
    </location>
</feature>
<feature type="chain" id="PRO_0000433508" description="Dolichyl-diphosphooligosaccharide--protein glycosyltransferase subunit 2">
    <location>
        <begin position="17"/>
        <end position="280"/>
    </location>
</feature>
<feature type="topological domain" description="Lumenal" evidence="7">
    <location>
        <begin position="17"/>
        <end position="187"/>
    </location>
</feature>
<feature type="transmembrane region" description="Helical" evidence="4">
    <location>
        <begin position="188"/>
        <end position="208"/>
    </location>
</feature>
<feature type="topological domain" description="Cytoplasmic" evidence="7">
    <location>
        <begin position="209"/>
        <end position="222"/>
    </location>
</feature>
<feature type="transmembrane region" description="Helical" evidence="4">
    <location>
        <begin position="223"/>
        <end position="243"/>
    </location>
</feature>
<feature type="topological domain" description="Lumenal" evidence="7">
    <location>
        <position position="244"/>
    </location>
</feature>
<feature type="transmembrane region" description="Helical" evidence="4">
    <location>
        <begin position="245"/>
        <end position="265"/>
    </location>
</feature>
<feature type="topological domain" description="Cytoplasmic" evidence="7">
    <location>
        <begin position="266"/>
        <end position="280"/>
    </location>
</feature>
<keyword id="KW-0256">Endoplasmic reticulum</keyword>
<keyword id="KW-0472">Membrane</keyword>
<keyword id="KW-1185">Reference proteome</keyword>
<keyword id="KW-0732">Signal</keyword>
<keyword id="KW-0812">Transmembrane</keyword>
<keyword id="KW-1133">Transmembrane helix</keyword>